<organism>
    <name type="scientific">Mus musculus</name>
    <name type="common">Mouse</name>
    <dbReference type="NCBI Taxonomy" id="10090"/>
    <lineage>
        <taxon>Eukaryota</taxon>
        <taxon>Metazoa</taxon>
        <taxon>Chordata</taxon>
        <taxon>Craniata</taxon>
        <taxon>Vertebrata</taxon>
        <taxon>Euteleostomi</taxon>
        <taxon>Mammalia</taxon>
        <taxon>Eutheria</taxon>
        <taxon>Euarchontoglires</taxon>
        <taxon>Glires</taxon>
        <taxon>Rodentia</taxon>
        <taxon>Myomorpha</taxon>
        <taxon>Muroidea</taxon>
        <taxon>Muridae</taxon>
        <taxon>Murinae</taxon>
        <taxon>Mus</taxon>
        <taxon>Mus</taxon>
    </lineage>
</organism>
<dbReference type="EC" id="3.6.4.13" evidence="4"/>
<dbReference type="EMBL" id="L25125">
    <property type="protein sequence ID" value="AAA53629.1"/>
    <property type="molecule type" value="mRNA"/>
</dbReference>
<dbReference type="EMBL" id="AK049467">
    <property type="protein sequence ID" value="BAC33762.1"/>
    <property type="molecule type" value="mRNA"/>
</dbReference>
<dbReference type="EMBL" id="AK146548">
    <property type="protein sequence ID" value="BAE27252.1"/>
    <property type="molecule type" value="mRNA"/>
</dbReference>
<dbReference type="EMBL" id="CH466525">
    <property type="protein sequence ID" value="EDL11480.1"/>
    <property type="molecule type" value="Genomic_DNA"/>
</dbReference>
<dbReference type="EMBL" id="BC011270">
    <property type="protein sequence ID" value="AAH11270.1"/>
    <property type="molecule type" value="mRNA"/>
</dbReference>
<dbReference type="CCDS" id="CCDS22668.1"/>
<dbReference type="PIR" id="I49731">
    <property type="entry name" value="I49731"/>
</dbReference>
<dbReference type="RefSeq" id="NP_031942.2">
    <property type="nucleotide sequence ID" value="NM_007916.2"/>
</dbReference>
<dbReference type="SMR" id="Q61655"/>
<dbReference type="BioGRID" id="199417">
    <property type="interactions" value="7"/>
</dbReference>
<dbReference type="FunCoup" id="Q61655">
    <property type="interactions" value="3642"/>
</dbReference>
<dbReference type="IntAct" id="Q61655">
    <property type="interactions" value="1"/>
</dbReference>
<dbReference type="STRING" id="10090.ENSMUSP00000047898"/>
<dbReference type="iPTMnet" id="Q61655"/>
<dbReference type="PhosphoSitePlus" id="Q61655"/>
<dbReference type="SwissPalm" id="Q61655"/>
<dbReference type="REPRODUCTION-2DPAGE" id="Q61655"/>
<dbReference type="jPOST" id="Q61655"/>
<dbReference type="PaxDb" id="10090-ENSMUSP00000047898"/>
<dbReference type="PeptideAtlas" id="Q61655"/>
<dbReference type="ProteomicsDB" id="277966"/>
<dbReference type="Pumba" id="Q61655"/>
<dbReference type="Antibodypedia" id="16355">
    <property type="antibodies" value="96 antibodies from 19 providers"/>
</dbReference>
<dbReference type="DNASU" id="13680"/>
<dbReference type="Ensembl" id="ENSMUST00000040416.8">
    <property type="protein sequence ID" value="ENSMUSP00000047898.8"/>
    <property type="gene ID" value="ENSMUSG00000015023.8"/>
</dbReference>
<dbReference type="GeneID" id="13680"/>
<dbReference type="KEGG" id="mmu:13680"/>
<dbReference type="UCSC" id="uc009nll.2">
    <property type="organism name" value="mouse"/>
</dbReference>
<dbReference type="AGR" id="MGI:99526"/>
<dbReference type="CTD" id="55308"/>
<dbReference type="MGI" id="MGI:99526">
    <property type="gene designation" value="Ddx19a"/>
</dbReference>
<dbReference type="VEuPathDB" id="HostDB:ENSMUSG00000015023"/>
<dbReference type="eggNOG" id="KOG0332">
    <property type="taxonomic scope" value="Eukaryota"/>
</dbReference>
<dbReference type="GeneTree" id="ENSGT00940000154417"/>
<dbReference type="HOGENOM" id="CLU_003041_1_0_1"/>
<dbReference type="InParanoid" id="Q61655"/>
<dbReference type="OMA" id="REYAIME"/>
<dbReference type="OrthoDB" id="10265785at2759"/>
<dbReference type="PhylomeDB" id="Q61655"/>
<dbReference type="TreeFam" id="TF314957"/>
<dbReference type="BioGRID-ORCS" id="13680">
    <property type="hits" value="24 hits in 78 CRISPR screens"/>
</dbReference>
<dbReference type="ChiTaRS" id="Ddx19a">
    <property type="organism name" value="mouse"/>
</dbReference>
<dbReference type="PRO" id="PR:Q61655"/>
<dbReference type="Proteomes" id="UP000000589">
    <property type="component" value="Chromosome 8"/>
</dbReference>
<dbReference type="RNAct" id="Q61655">
    <property type="molecule type" value="protein"/>
</dbReference>
<dbReference type="Bgee" id="ENSMUSG00000015023">
    <property type="expression patterns" value="Expressed in animal zygote and 258 other cell types or tissues"/>
</dbReference>
<dbReference type="GO" id="GO:0005737">
    <property type="term" value="C:cytoplasm"/>
    <property type="evidence" value="ECO:0007669"/>
    <property type="project" value="UniProtKB-SubCell"/>
</dbReference>
<dbReference type="GO" id="GO:0005654">
    <property type="term" value="C:nucleoplasm"/>
    <property type="evidence" value="ECO:0007669"/>
    <property type="project" value="UniProtKB-SubCell"/>
</dbReference>
<dbReference type="GO" id="GO:0005524">
    <property type="term" value="F:ATP binding"/>
    <property type="evidence" value="ECO:0007669"/>
    <property type="project" value="UniProtKB-KW"/>
</dbReference>
<dbReference type="GO" id="GO:0016887">
    <property type="term" value="F:ATP hydrolysis activity"/>
    <property type="evidence" value="ECO:0007669"/>
    <property type="project" value="RHEA"/>
</dbReference>
<dbReference type="GO" id="GO:0003723">
    <property type="term" value="F:RNA binding"/>
    <property type="evidence" value="ECO:0007669"/>
    <property type="project" value="UniProtKB-KW"/>
</dbReference>
<dbReference type="GO" id="GO:0003724">
    <property type="term" value="F:RNA helicase activity"/>
    <property type="evidence" value="ECO:0007669"/>
    <property type="project" value="UniProtKB-EC"/>
</dbReference>
<dbReference type="GO" id="GO:0043065">
    <property type="term" value="P:positive regulation of apoptotic process"/>
    <property type="evidence" value="ECO:0007669"/>
    <property type="project" value="Ensembl"/>
</dbReference>
<dbReference type="GO" id="GO:0010043">
    <property type="term" value="P:response to zinc ion"/>
    <property type="evidence" value="ECO:0007669"/>
    <property type="project" value="Ensembl"/>
</dbReference>
<dbReference type="CDD" id="cd18787">
    <property type="entry name" value="SF2_C_DEAD"/>
    <property type="match status" value="1"/>
</dbReference>
<dbReference type="FunFam" id="3.40.50.300:FF:000318">
    <property type="entry name" value="ATP-dependent RNA helicase DDX19B"/>
    <property type="match status" value="1"/>
</dbReference>
<dbReference type="FunFam" id="3.40.50.300:FF:000357">
    <property type="entry name" value="ATP-dependent RNA helicase DDX19B"/>
    <property type="match status" value="1"/>
</dbReference>
<dbReference type="Gene3D" id="6.10.250.2170">
    <property type="match status" value="1"/>
</dbReference>
<dbReference type="Gene3D" id="3.40.50.300">
    <property type="entry name" value="P-loop containing nucleotide triphosphate hydrolases"/>
    <property type="match status" value="2"/>
</dbReference>
<dbReference type="InterPro" id="IPR011545">
    <property type="entry name" value="DEAD/DEAH_box_helicase_dom"/>
</dbReference>
<dbReference type="InterPro" id="IPR014001">
    <property type="entry name" value="Helicase_ATP-bd"/>
</dbReference>
<dbReference type="InterPro" id="IPR001650">
    <property type="entry name" value="Helicase_C-like"/>
</dbReference>
<dbReference type="InterPro" id="IPR027417">
    <property type="entry name" value="P-loop_NTPase"/>
</dbReference>
<dbReference type="InterPro" id="IPR014014">
    <property type="entry name" value="RNA_helicase_DEAD_Q_motif"/>
</dbReference>
<dbReference type="PANTHER" id="PTHR47958">
    <property type="entry name" value="ATP-DEPENDENT RNA HELICASE DBP3"/>
    <property type="match status" value="1"/>
</dbReference>
<dbReference type="Pfam" id="PF00270">
    <property type="entry name" value="DEAD"/>
    <property type="match status" value="1"/>
</dbReference>
<dbReference type="Pfam" id="PF00271">
    <property type="entry name" value="Helicase_C"/>
    <property type="match status" value="1"/>
</dbReference>
<dbReference type="SMART" id="SM00487">
    <property type="entry name" value="DEXDc"/>
    <property type="match status" value="1"/>
</dbReference>
<dbReference type="SMART" id="SM00490">
    <property type="entry name" value="HELICc"/>
    <property type="match status" value="1"/>
</dbReference>
<dbReference type="SUPFAM" id="SSF52540">
    <property type="entry name" value="P-loop containing nucleoside triphosphate hydrolases"/>
    <property type="match status" value="1"/>
</dbReference>
<dbReference type="PROSITE" id="PS51192">
    <property type="entry name" value="HELICASE_ATP_BIND_1"/>
    <property type="match status" value="1"/>
</dbReference>
<dbReference type="PROSITE" id="PS51194">
    <property type="entry name" value="HELICASE_CTER"/>
    <property type="match status" value="1"/>
</dbReference>
<dbReference type="PROSITE" id="PS51195">
    <property type="entry name" value="Q_MOTIF"/>
    <property type="match status" value="1"/>
</dbReference>
<accession>Q61655</accession>
<accession>Q543M2</accession>
<accession>Q921R0</accession>
<comment type="function">
    <text evidence="4">ATP-dependent RNA helicase involved in mRNA export from the nucleus. Rather than unwinding RNA duplexes, DDX19 functions as a remodeler of ribonucleoprotein particles, whereby proteins bound to nuclear mRNA are dissociated and replaced by cytoplasmic mRNA binding proteins.</text>
</comment>
<comment type="catalytic activity">
    <reaction evidence="4">
        <text>ATP + H2O = ADP + phosphate + H(+)</text>
        <dbReference type="Rhea" id="RHEA:13065"/>
        <dbReference type="ChEBI" id="CHEBI:15377"/>
        <dbReference type="ChEBI" id="CHEBI:15378"/>
        <dbReference type="ChEBI" id="CHEBI:30616"/>
        <dbReference type="ChEBI" id="CHEBI:43474"/>
        <dbReference type="ChEBI" id="CHEBI:456216"/>
        <dbReference type="EC" id="3.6.4.13"/>
    </reaction>
</comment>
<comment type="subcellular location">
    <subcellularLocation>
        <location evidence="4">Cytoplasm</location>
    </subcellularLocation>
    <subcellularLocation>
        <location evidence="4">Nucleus</location>
        <location evidence="4">Nucleoplasm</location>
    </subcellularLocation>
    <text evidence="4">Associates with the nuclear pore complex cytoplasmic fibrils.</text>
</comment>
<comment type="tissue specificity">
    <text>Found in testis, heart, brain, liver, skeletal muscle, and kidney.</text>
</comment>
<comment type="domain">
    <text evidence="1">The N-terminal extension helix acts as an autoinhibitory domain, preventing ATP hydrolysis, unless the N-terminus of the protein is displaced by RNA binding, allowing cleft closure to bring key side chains into position for catalysis.</text>
</comment>
<comment type="similarity">
    <text evidence="8">Belongs to the DEAD box helicase family. DDX19/DBP5 subfamily.</text>
</comment>
<feature type="initiator methionine" description="Removed" evidence="2">
    <location>
        <position position="1"/>
    </location>
</feature>
<feature type="chain" id="PRO_0000055023" description="ATP-dependent RNA helicase DDX19A">
    <location>
        <begin position="2"/>
        <end position="478"/>
    </location>
</feature>
<feature type="domain" description="Helicase ATP-binding" evidence="5">
    <location>
        <begin position="124"/>
        <end position="294"/>
    </location>
</feature>
<feature type="domain" description="Helicase C-terminal" evidence="6">
    <location>
        <begin position="305"/>
        <end position="473"/>
    </location>
</feature>
<feature type="region of interest" description="N-terminal lobe" evidence="1">
    <location>
        <begin position="2"/>
        <end position="299"/>
    </location>
</feature>
<feature type="region of interest" description="Disordered" evidence="7">
    <location>
        <begin position="34"/>
        <end position="53"/>
    </location>
</feature>
<feature type="region of interest" description="N-terminal helix" evidence="1">
    <location>
        <begin position="54"/>
        <end position="67"/>
    </location>
</feature>
<feature type="region of interest" description="C-terminal lobe" evidence="1">
    <location>
        <begin position="300"/>
        <end position="478"/>
    </location>
</feature>
<feature type="short sequence motif" description="Q motif">
    <location>
        <begin position="91"/>
        <end position="119"/>
    </location>
</feature>
<feature type="short sequence motif" description="DEAD box">
    <location>
        <begin position="241"/>
        <end position="244"/>
    </location>
</feature>
<feature type="binding site" evidence="1">
    <location>
        <position position="118"/>
    </location>
    <ligand>
        <name>ATP</name>
        <dbReference type="ChEBI" id="CHEBI:30616"/>
    </ligand>
</feature>
<feature type="binding site" evidence="5">
    <location>
        <begin position="137"/>
        <end position="144"/>
    </location>
    <ligand>
        <name>ATP</name>
        <dbReference type="ChEBI" id="CHEBI:30616"/>
    </ligand>
</feature>
<feature type="binding site" evidence="1">
    <location>
        <position position="428"/>
    </location>
    <ligand>
        <name>ATP</name>
        <dbReference type="ChEBI" id="CHEBI:30616"/>
    </ligand>
</feature>
<feature type="binding site" evidence="1">
    <location>
        <position position="431"/>
    </location>
    <ligand>
        <name>ATP</name>
        <dbReference type="ChEBI" id="CHEBI:30616"/>
    </ligand>
</feature>
<feature type="modified residue" description="N-acetylalanine" evidence="2">
    <location>
        <position position="2"/>
    </location>
</feature>
<feature type="modified residue" description="Phosphothreonine" evidence="3">
    <location>
        <position position="42"/>
    </location>
</feature>
<feature type="cross-link" description="Glycyl lysine isopeptide (Lys-Gly) (interchain with G-Cter in SUMO1); alternate" evidence="2">
    <location>
        <position position="26"/>
    </location>
</feature>
<feature type="cross-link" description="Glycyl lysine isopeptide (Lys-Gly) (interchain with G-Cter in SUMO2); alternate" evidence="2">
    <location>
        <position position="26"/>
    </location>
</feature>
<feature type="sequence conflict" description="In Ref. 1; AAA53629." evidence="8" ref="1">
    <original>VKA</original>
    <variation>AKS</variation>
    <location>
        <begin position="30"/>
        <end position="32"/>
    </location>
</feature>
<feature type="sequence conflict" description="In Ref. 1; AAA53629." evidence="8" ref="1">
    <original>ML</original>
    <variation>IV</variation>
    <location>
        <begin position="262"/>
        <end position="263"/>
    </location>
</feature>
<protein>
    <recommendedName>
        <fullName>ATP-dependent RNA helicase DDX19A</fullName>
        <ecNumber evidence="4">3.6.4.13</ecNumber>
    </recommendedName>
    <alternativeName>
        <fullName>DEAD box RNA helicase DEAD5</fullName>
        <shortName>mDEAD5</shortName>
    </alternativeName>
    <alternativeName>
        <fullName>DEAD box protein 19A</fullName>
    </alternativeName>
    <alternativeName>
        <fullName>Eukaryotic translation initiation factor 4A-related sequence 1</fullName>
    </alternativeName>
</protein>
<name>DD19A_MOUSE</name>
<sequence>MATDSWALAVDEQEAAVKSMSSLQIKEEKVKADTNGVIKTSTTAEKTEEEEKEDRAAQSLLNKLIRSNLVDNTNQVEVLQRDPSSPLYSVKSFEELRLKPQLLQGVYAMGFNRPSKIQENALPMMLAEPPQNLIAQSQSGTGKTAAFVLAMLSRVEPADRYPQCLCLSPTYELALQTGKVIEQMGKFHPELKLAYAVRGNKLERGQKVSEQIVIGTPGTVLDWCSKLKFIDPKKIKVFVLDEADVMIATQGHQDQSIRIQRMLPRNCQMLLFSATFEDSVWKFAQKVVPDPNIIKLKREEETLDTIKQYYVLCNNREEKFQALCNLYGAITIAQAMIFCHTRKTASWLAAELSKEGHQVALLSGEMMVEQRAAVIERFREGKEKVLVTTNVCARGIDVEQVSVVINFDLPVDKDGNPDNETYLHRIGRTGRFGKRGLAVNMVDSKHSMNILNRIQEHFNKKIERLDTDDLDEIEKIAN</sequence>
<keyword id="KW-0007">Acetylation</keyword>
<keyword id="KW-0067">ATP-binding</keyword>
<keyword id="KW-0963">Cytoplasm</keyword>
<keyword id="KW-0347">Helicase</keyword>
<keyword id="KW-0378">Hydrolase</keyword>
<keyword id="KW-1017">Isopeptide bond</keyword>
<keyword id="KW-0547">Nucleotide-binding</keyword>
<keyword id="KW-0539">Nucleus</keyword>
<keyword id="KW-0597">Phosphoprotein</keyword>
<keyword id="KW-1185">Reference proteome</keyword>
<keyword id="KW-0694">RNA-binding</keyword>
<keyword id="KW-0832">Ubl conjugation</keyword>
<reference key="1">
    <citation type="journal article" date="1994" name="Gene">
        <title>Mouse erythroid cells express multiple putative RNA helicase genes exhibiting high sequence conservation from yeast to mammals.</title>
        <authorList>
            <person name="Gee S.L."/>
            <person name="Conboy J.G."/>
        </authorList>
    </citation>
    <scope>NUCLEOTIDE SEQUENCE [MRNA]</scope>
    <source>
        <tissue>Erythroleukemia</tissue>
    </source>
</reference>
<reference key="2">
    <citation type="journal article" date="2005" name="Science">
        <title>The transcriptional landscape of the mammalian genome.</title>
        <authorList>
            <person name="Carninci P."/>
            <person name="Kasukawa T."/>
            <person name="Katayama S."/>
            <person name="Gough J."/>
            <person name="Frith M.C."/>
            <person name="Maeda N."/>
            <person name="Oyama R."/>
            <person name="Ravasi T."/>
            <person name="Lenhard B."/>
            <person name="Wells C."/>
            <person name="Kodzius R."/>
            <person name="Shimokawa K."/>
            <person name="Bajic V.B."/>
            <person name="Brenner S.E."/>
            <person name="Batalov S."/>
            <person name="Forrest A.R."/>
            <person name="Zavolan M."/>
            <person name="Davis M.J."/>
            <person name="Wilming L.G."/>
            <person name="Aidinis V."/>
            <person name="Allen J.E."/>
            <person name="Ambesi-Impiombato A."/>
            <person name="Apweiler R."/>
            <person name="Aturaliya R.N."/>
            <person name="Bailey T.L."/>
            <person name="Bansal M."/>
            <person name="Baxter L."/>
            <person name="Beisel K.W."/>
            <person name="Bersano T."/>
            <person name="Bono H."/>
            <person name="Chalk A.M."/>
            <person name="Chiu K.P."/>
            <person name="Choudhary V."/>
            <person name="Christoffels A."/>
            <person name="Clutterbuck D.R."/>
            <person name="Crowe M.L."/>
            <person name="Dalla E."/>
            <person name="Dalrymple B.P."/>
            <person name="de Bono B."/>
            <person name="Della Gatta G."/>
            <person name="di Bernardo D."/>
            <person name="Down T."/>
            <person name="Engstrom P."/>
            <person name="Fagiolini M."/>
            <person name="Faulkner G."/>
            <person name="Fletcher C.F."/>
            <person name="Fukushima T."/>
            <person name="Furuno M."/>
            <person name="Futaki S."/>
            <person name="Gariboldi M."/>
            <person name="Georgii-Hemming P."/>
            <person name="Gingeras T.R."/>
            <person name="Gojobori T."/>
            <person name="Green R.E."/>
            <person name="Gustincich S."/>
            <person name="Harbers M."/>
            <person name="Hayashi Y."/>
            <person name="Hensch T.K."/>
            <person name="Hirokawa N."/>
            <person name="Hill D."/>
            <person name="Huminiecki L."/>
            <person name="Iacono M."/>
            <person name="Ikeo K."/>
            <person name="Iwama A."/>
            <person name="Ishikawa T."/>
            <person name="Jakt M."/>
            <person name="Kanapin A."/>
            <person name="Katoh M."/>
            <person name="Kawasawa Y."/>
            <person name="Kelso J."/>
            <person name="Kitamura H."/>
            <person name="Kitano H."/>
            <person name="Kollias G."/>
            <person name="Krishnan S.P."/>
            <person name="Kruger A."/>
            <person name="Kummerfeld S.K."/>
            <person name="Kurochkin I.V."/>
            <person name="Lareau L.F."/>
            <person name="Lazarevic D."/>
            <person name="Lipovich L."/>
            <person name="Liu J."/>
            <person name="Liuni S."/>
            <person name="McWilliam S."/>
            <person name="Madan Babu M."/>
            <person name="Madera M."/>
            <person name="Marchionni L."/>
            <person name="Matsuda H."/>
            <person name="Matsuzawa S."/>
            <person name="Miki H."/>
            <person name="Mignone F."/>
            <person name="Miyake S."/>
            <person name="Morris K."/>
            <person name="Mottagui-Tabar S."/>
            <person name="Mulder N."/>
            <person name="Nakano N."/>
            <person name="Nakauchi H."/>
            <person name="Ng P."/>
            <person name="Nilsson R."/>
            <person name="Nishiguchi S."/>
            <person name="Nishikawa S."/>
            <person name="Nori F."/>
            <person name="Ohara O."/>
            <person name="Okazaki Y."/>
            <person name="Orlando V."/>
            <person name="Pang K.C."/>
            <person name="Pavan W.J."/>
            <person name="Pavesi G."/>
            <person name="Pesole G."/>
            <person name="Petrovsky N."/>
            <person name="Piazza S."/>
            <person name="Reed J."/>
            <person name="Reid J.F."/>
            <person name="Ring B.Z."/>
            <person name="Ringwald M."/>
            <person name="Rost B."/>
            <person name="Ruan Y."/>
            <person name="Salzberg S.L."/>
            <person name="Sandelin A."/>
            <person name="Schneider C."/>
            <person name="Schoenbach C."/>
            <person name="Sekiguchi K."/>
            <person name="Semple C.A."/>
            <person name="Seno S."/>
            <person name="Sessa L."/>
            <person name="Sheng Y."/>
            <person name="Shibata Y."/>
            <person name="Shimada H."/>
            <person name="Shimada K."/>
            <person name="Silva D."/>
            <person name="Sinclair B."/>
            <person name="Sperling S."/>
            <person name="Stupka E."/>
            <person name="Sugiura K."/>
            <person name="Sultana R."/>
            <person name="Takenaka Y."/>
            <person name="Taki K."/>
            <person name="Tammoja K."/>
            <person name="Tan S.L."/>
            <person name="Tang S."/>
            <person name="Taylor M.S."/>
            <person name="Tegner J."/>
            <person name="Teichmann S.A."/>
            <person name="Ueda H.R."/>
            <person name="van Nimwegen E."/>
            <person name="Verardo R."/>
            <person name="Wei C.L."/>
            <person name="Yagi K."/>
            <person name="Yamanishi H."/>
            <person name="Zabarovsky E."/>
            <person name="Zhu S."/>
            <person name="Zimmer A."/>
            <person name="Hide W."/>
            <person name="Bult C."/>
            <person name="Grimmond S.M."/>
            <person name="Teasdale R.D."/>
            <person name="Liu E.T."/>
            <person name="Brusic V."/>
            <person name="Quackenbush J."/>
            <person name="Wahlestedt C."/>
            <person name="Mattick J.S."/>
            <person name="Hume D.A."/>
            <person name="Kai C."/>
            <person name="Sasaki D."/>
            <person name="Tomaru Y."/>
            <person name="Fukuda S."/>
            <person name="Kanamori-Katayama M."/>
            <person name="Suzuki M."/>
            <person name="Aoki J."/>
            <person name="Arakawa T."/>
            <person name="Iida J."/>
            <person name="Imamura K."/>
            <person name="Itoh M."/>
            <person name="Kato T."/>
            <person name="Kawaji H."/>
            <person name="Kawagashira N."/>
            <person name="Kawashima T."/>
            <person name="Kojima M."/>
            <person name="Kondo S."/>
            <person name="Konno H."/>
            <person name="Nakano K."/>
            <person name="Ninomiya N."/>
            <person name="Nishio T."/>
            <person name="Okada M."/>
            <person name="Plessy C."/>
            <person name="Shibata K."/>
            <person name="Shiraki T."/>
            <person name="Suzuki S."/>
            <person name="Tagami M."/>
            <person name="Waki K."/>
            <person name="Watahiki A."/>
            <person name="Okamura-Oho Y."/>
            <person name="Suzuki H."/>
            <person name="Kawai J."/>
            <person name="Hayashizaki Y."/>
        </authorList>
    </citation>
    <scope>NUCLEOTIDE SEQUENCE [LARGE SCALE MRNA]</scope>
    <source>
        <strain>C57BL/6J</strain>
        <tissue>Embryo</tissue>
        <tissue>Stomach</tissue>
    </source>
</reference>
<reference key="3">
    <citation type="submission" date="2005-07" db="EMBL/GenBank/DDBJ databases">
        <authorList>
            <person name="Mural R.J."/>
            <person name="Adams M.D."/>
            <person name="Myers E.W."/>
            <person name="Smith H.O."/>
            <person name="Venter J.C."/>
        </authorList>
    </citation>
    <scope>NUCLEOTIDE SEQUENCE [LARGE SCALE GENOMIC DNA]</scope>
</reference>
<reference key="4">
    <citation type="journal article" date="2004" name="Genome Res.">
        <title>The status, quality, and expansion of the NIH full-length cDNA project: the Mammalian Gene Collection (MGC).</title>
        <authorList>
            <consortium name="The MGC Project Team"/>
        </authorList>
    </citation>
    <scope>NUCLEOTIDE SEQUENCE [LARGE SCALE MRNA]</scope>
</reference>
<reference key="5">
    <citation type="journal article" date="2010" name="Cell">
        <title>A tissue-specific atlas of mouse protein phosphorylation and expression.</title>
        <authorList>
            <person name="Huttlin E.L."/>
            <person name="Jedrychowski M.P."/>
            <person name="Elias J.E."/>
            <person name="Goswami T."/>
            <person name="Rad R."/>
            <person name="Beausoleil S.A."/>
            <person name="Villen J."/>
            <person name="Haas W."/>
            <person name="Sowa M.E."/>
            <person name="Gygi S.P."/>
        </authorList>
    </citation>
    <scope>IDENTIFICATION BY MASS SPECTROMETRY [LARGE SCALE ANALYSIS]</scope>
    <source>
        <tissue>Heart</tissue>
        <tissue>Lung</tissue>
        <tissue>Pancreas</tissue>
        <tissue>Spleen</tissue>
        <tissue>Testis</tissue>
    </source>
</reference>
<proteinExistence type="evidence at protein level"/>
<evidence type="ECO:0000250" key="1"/>
<evidence type="ECO:0000250" key="2">
    <source>
        <dbReference type="UniProtKB" id="Q9NUU7"/>
    </source>
</evidence>
<evidence type="ECO:0000250" key="3">
    <source>
        <dbReference type="UniProtKB" id="Q9QY15"/>
    </source>
</evidence>
<evidence type="ECO:0000250" key="4">
    <source>
        <dbReference type="UniProtKB" id="Q9UMR2"/>
    </source>
</evidence>
<evidence type="ECO:0000255" key="5">
    <source>
        <dbReference type="PROSITE-ProRule" id="PRU00541"/>
    </source>
</evidence>
<evidence type="ECO:0000255" key="6">
    <source>
        <dbReference type="PROSITE-ProRule" id="PRU00542"/>
    </source>
</evidence>
<evidence type="ECO:0000256" key="7">
    <source>
        <dbReference type="SAM" id="MobiDB-lite"/>
    </source>
</evidence>
<evidence type="ECO:0000305" key="8"/>
<gene>
    <name type="primary">Ddx19a</name>
    <name type="synonym">Ddx19</name>
    <name type="synonym">Eif4a-rs1</name>
</gene>